<organism>
    <name type="scientific">Arabidopsis thaliana</name>
    <name type="common">Mouse-ear cress</name>
    <dbReference type="NCBI Taxonomy" id="3702"/>
    <lineage>
        <taxon>Eukaryota</taxon>
        <taxon>Viridiplantae</taxon>
        <taxon>Streptophyta</taxon>
        <taxon>Embryophyta</taxon>
        <taxon>Tracheophyta</taxon>
        <taxon>Spermatophyta</taxon>
        <taxon>Magnoliopsida</taxon>
        <taxon>eudicotyledons</taxon>
        <taxon>Gunneridae</taxon>
        <taxon>Pentapetalae</taxon>
        <taxon>rosids</taxon>
        <taxon>malvids</taxon>
        <taxon>Brassicales</taxon>
        <taxon>Brassicaceae</taxon>
        <taxon>Camelineae</taxon>
        <taxon>Arabidopsis</taxon>
    </lineage>
</organism>
<accession>O82659</accession>
<name>CML20_ARATH</name>
<keyword id="KW-0106">Calcium</keyword>
<keyword id="KW-0479">Metal-binding</keyword>
<keyword id="KW-1185">Reference proteome</keyword>
<keyword id="KW-0677">Repeat</keyword>
<dbReference type="EMBL" id="AJ009672">
    <property type="protein sequence ID" value="CAA08773.1"/>
    <property type="molecule type" value="mRNA"/>
</dbReference>
<dbReference type="EMBL" id="AL132976">
    <property type="protein sequence ID" value="CAB62315.1"/>
    <property type="molecule type" value="Genomic_DNA"/>
</dbReference>
<dbReference type="EMBL" id="CP002686">
    <property type="protein sequence ID" value="AEE78658.1"/>
    <property type="molecule type" value="Genomic_DNA"/>
</dbReference>
<dbReference type="EMBL" id="AK175359">
    <property type="protein sequence ID" value="BAD43122.1"/>
    <property type="molecule type" value="mRNA"/>
</dbReference>
<dbReference type="EMBL" id="AK175375">
    <property type="protein sequence ID" value="BAD43138.1"/>
    <property type="molecule type" value="mRNA"/>
</dbReference>
<dbReference type="EMBL" id="AK176828">
    <property type="protein sequence ID" value="BAD44591.1"/>
    <property type="molecule type" value="mRNA"/>
</dbReference>
<dbReference type="EMBL" id="BT025522">
    <property type="protein sequence ID" value="ABF58940.1"/>
    <property type="molecule type" value="mRNA"/>
</dbReference>
<dbReference type="EMBL" id="AK176882">
    <property type="protein sequence ID" value="BAD44645.1"/>
    <property type="molecule type" value="mRNA"/>
</dbReference>
<dbReference type="PIR" id="T45582">
    <property type="entry name" value="T45582"/>
</dbReference>
<dbReference type="RefSeq" id="NP_190605.1">
    <property type="nucleotide sequence ID" value="NM_114896.5"/>
</dbReference>
<dbReference type="SMR" id="O82659"/>
<dbReference type="BioGRID" id="9516">
    <property type="interactions" value="4"/>
</dbReference>
<dbReference type="FunCoup" id="O82659">
    <property type="interactions" value="886"/>
</dbReference>
<dbReference type="IntAct" id="O82659">
    <property type="interactions" value="3"/>
</dbReference>
<dbReference type="STRING" id="3702.O82659"/>
<dbReference type="iPTMnet" id="O82659"/>
<dbReference type="PaxDb" id="3702-AT3G50360.1"/>
<dbReference type="ProteomicsDB" id="240996"/>
<dbReference type="EnsemblPlants" id="AT3G50360.1">
    <property type="protein sequence ID" value="AT3G50360.1"/>
    <property type="gene ID" value="AT3G50360"/>
</dbReference>
<dbReference type="GeneID" id="824198"/>
<dbReference type="Gramene" id="AT3G50360.1">
    <property type="protein sequence ID" value="AT3G50360.1"/>
    <property type="gene ID" value="AT3G50360"/>
</dbReference>
<dbReference type="KEGG" id="ath:AT3G50360"/>
<dbReference type="Araport" id="AT3G50360"/>
<dbReference type="TAIR" id="AT3G50360">
    <property type="gene designation" value="CEN2"/>
</dbReference>
<dbReference type="eggNOG" id="KOG0028">
    <property type="taxonomic scope" value="Eukaryota"/>
</dbReference>
<dbReference type="HOGENOM" id="CLU_061288_18_2_1"/>
<dbReference type="InParanoid" id="O82659"/>
<dbReference type="OMA" id="HPGLTQQ"/>
<dbReference type="OrthoDB" id="343296at2759"/>
<dbReference type="PhylomeDB" id="O82659"/>
<dbReference type="PRO" id="PR:O82659"/>
<dbReference type="Proteomes" id="UP000006548">
    <property type="component" value="Chromosome 3"/>
</dbReference>
<dbReference type="ExpressionAtlas" id="O82659">
    <property type="expression patterns" value="baseline and differential"/>
</dbReference>
<dbReference type="GO" id="GO:0005737">
    <property type="term" value="C:cytoplasm"/>
    <property type="evidence" value="ECO:0000314"/>
    <property type="project" value="TAIR"/>
</dbReference>
<dbReference type="GO" id="GO:0005829">
    <property type="term" value="C:cytosol"/>
    <property type="evidence" value="ECO:0007005"/>
    <property type="project" value="TAIR"/>
</dbReference>
<dbReference type="GO" id="GO:0005886">
    <property type="term" value="C:plasma membrane"/>
    <property type="evidence" value="ECO:0007005"/>
    <property type="project" value="TAIR"/>
</dbReference>
<dbReference type="GO" id="GO:0005509">
    <property type="term" value="F:calcium ion binding"/>
    <property type="evidence" value="ECO:0000314"/>
    <property type="project" value="TAIR"/>
</dbReference>
<dbReference type="GO" id="GO:1901527">
    <property type="term" value="P:abscisic acid-activated signaling pathway involved in stomatal movement"/>
    <property type="evidence" value="ECO:0000315"/>
    <property type="project" value="TAIR"/>
</dbReference>
<dbReference type="CDD" id="cd00051">
    <property type="entry name" value="EFh"/>
    <property type="match status" value="1"/>
</dbReference>
<dbReference type="FunFam" id="1.10.238.10:FF:000268">
    <property type="entry name" value="Centrin 2"/>
    <property type="match status" value="1"/>
</dbReference>
<dbReference type="FunFam" id="1.10.238.10:FF:000256">
    <property type="entry name" value="probable calcium-binding protein CML20"/>
    <property type="match status" value="1"/>
</dbReference>
<dbReference type="Gene3D" id="1.10.238.10">
    <property type="entry name" value="EF-hand"/>
    <property type="match status" value="2"/>
</dbReference>
<dbReference type="InterPro" id="IPR050230">
    <property type="entry name" value="CALM/Myosin/TropC-like"/>
</dbReference>
<dbReference type="InterPro" id="IPR011992">
    <property type="entry name" value="EF-hand-dom_pair"/>
</dbReference>
<dbReference type="InterPro" id="IPR018247">
    <property type="entry name" value="EF_Hand_1_Ca_BS"/>
</dbReference>
<dbReference type="InterPro" id="IPR002048">
    <property type="entry name" value="EF_hand_dom"/>
</dbReference>
<dbReference type="PANTHER" id="PTHR23048:SF59">
    <property type="entry name" value="EF-HAND SUPERFAMILY PROTEIN"/>
    <property type="match status" value="1"/>
</dbReference>
<dbReference type="PANTHER" id="PTHR23048">
    <property type="entry name" value="MYOSIN LIGHT CHAIN 1, 3"/>
    <property type="match status" value="1"/>
</dbReference>
<dbReference type="Pfam" id="PF13499">
    <property type="entry name" value="EF-hand_7"/>
    <property type="match status" value="2"/>
</dbReference>
<dbReference type="SMART" id="SM00054">
    <property type="entry name" value="EFh"/>
    <property type="match status" value="4"/>
</dbReference>
<dbReference type="SUPFAM" id="SSF47473">
    <property type="entry name" value="EF-hand"/>
    <property type="match status" value="1"/>
</dbReference>
<dbReference type="PROSITE" id="PS00018">
    <property type="entry name" value="EF_HAND_1"/>
    <property type="match status" value="4"/>
</dbReference>
<dbReference type="PROSITE" id="PS50222">
    <property type="entry name" value="EF_HAND_2"/>
    <property type="match status" value="4"/>
</dbReference>
<sequence>MSSIYRTVSRKEKPRRHHGLTTQKKQEIKEAFELFDTDGSGTIDAKELNVAMRALGFEMTEEQINKMIADVDKDGSGAIDFDEFVHMMTAKIGERDTKEELTKAFQIIDLDKNGKISPDDIKRMAKDLGENFTDAEIREMVEEADRDRDGEVNMDEFMRMMRRTAYGGN</sequence>
<comment type="function">
    <text evidence="1">Potential calcium sensor.</text>
</comment>
<comment type="subunit">
    <text evidence="4 5 6">Interacts with TON1A and TON1B (PubMed:18757558). Interacts with SAC3A and SAC3B (PubMed:19843313). Interacts with UCH1 and UCH2 (PubMed:22951400).</text>
</comment>
<comment type="induction">
    <text evidence="7">By wounding and infection by the bacterial pathogens X.campestris and P.syringae.</text>
</comment>
<comment type="caution">
    <text evidence="10">Although assigned as a calmodulin family member by Ref.6, it only contains EF-hand domains.</text>
</comment>
<gene>
    <name evidence="9" type="primary">CML20</name>
    <name evidence="8" type="synonym">CEN1</name>
    <name evidence="11" type="ordered locus">At3g50360</name>
    <name evidence="12" type="ORF">F11C1.200</name>
</gene>
<protein>
    <recommendedName>
        <fullName evidence="9">Probable calcium-binding protein CML20</fullName>
    </recommendedName>
    <alternativeName>
        <fullName evidence="9">Calmodulin-like protein 20</fullName>
    </alternativeName>
    <alternativeName>
        <fullName evidence="8">Centrin 1</fullName>
        <shortName evidence="8">AtCEN1</shortName>
    </alternativeName>
</protein>
<proteinExistence type="evidence at protein level"/>
<feature type="chain" id="PRO_0000342949" description="Probable calcium-binding protein CML20">
    <location>
        <begin position="1"/>
        <end position="169"/>
    </location>
</feature>
<feature type="domain" description="EF-hand 1" evidence="2">
    <location>
        <begin position="23"/>
        <end position="58"/>
    </location>
</feature>
<feature type="domain" description="EF-hand 2" evidence="2">
    <location>
        <begin position="59"/>
        <end position="94"/>
    </location>
</feature>
<feature type="domain" description="EF-hand 3" evidence="2">
    <location>
        <begin position="96"/>
        <end position="131"/>
    </location>
</feature>
<feature type="domain" description="EF-hand 4" evidence="2">
    <location>
        <begin position="132"/>
        <end position="167"/>
    </location>
</feature>
<feature type="region of interest" description="Disordered" evidence="3">
    <location>
        <begin position="1"/>
        <end position="23"/>
    </location>
</feature>
<feature type="binding site" evidence="2">
    <location>
        <position position="36"/>
    </location>
    <ligand>
        <name>Ca(2+)</name>
        <dbReference type="ChEBI" id="CHEBI:29108"/>
        <label>1</label>
    </ligand>
</feature>
<feature type="binding site" evidence="2">
    <location>
        <position position="38"/>
    </location>
    <ligand>
        <name>Ca(2+)</name>
        <dbReference type="ChEBI" id="CHEBI:29108"/>
        <label>1</label>
    </ligand>
</feature>
<feature type="binding site" evidence="2">
    <location>
        <position position="40"/>
    </location>
    <ligand>
        <name>Ca(2+)</name>
        <dbReference type="ChEBI" id="CHEBI:29108"/>
        <label>1</label>
    </ligand>
</feature>
<feature type="binding site" evidence="2">
    <location>
        <position position="42"/>
    </location>
    <ligand>
        <name>Ca(2+)</name>
        <dbReference type="ChEBI" id="CHEBI:29108"/>
        <label>1</label>
    </ligand>
</feature>
<feature type="binding site" evidence="2">
    <location>
        <position position="47"/>
    </location>
    <ligand>
        <name>Ca(2+)</name>
        <dbReference type="ChEBI" id="CHEBI:29108"/>
        <label>1</label>
    </ligand>
</feature>
<feature type="binding site" evidence="2">
    <location>
        <position position="72"/>
    </location>
    <ligand>
        <name>Ca(2+)</name>
        <dbReference type="ChEBI" id="CHEBI:29108"/>
        <label>2</label>
    </ligand>
</feature>
<feature type="binding site" evidence="2">
    <location>
        <position position="74"/>
    </location>
    <ligand>
        <name>Ca(2+)</name>
        <dbReference type="ChEBI" id="CHEBI:29108"/>
        <label>2</label>
    </ligand>
</feature>
<feature type="binding site" evidence="2">
    <location>
        <position position="76"/>
    </location>
    <ligand>
        <name>Ca(2+)</name>
        <dbReference type="ChEBI" id="CHEBI:29108"/>
        <label>2</label>
    </ligand>
</feature>
<feature type="binding site" evidence="2">
    <location>
        <position position="83"/>
    </location>
    <ligand>
        <name>Ca(2+)</name>
        <dbReference type="ChEBI" id="CHEBI:29108"/>
        <label>2</label>
    </ligand>
</feature>
<feature type="binding site" evidence="2">
    <location>
        <position position="109"/>
    </location>
    <ligand>
        <name>Ca(2+)</name>
        <dbReference type="ChEBI" id="CHEBI:29108"/>
        <label>3</label>
    </ligand>
</feature>
<feature type="binding site" evidence="2">
    <location>
        <position position="111"/>
    </location>
    <ligand>
        <name>Ca(2+)</name>
        <dbReference type="ChEBI" id="CHEBI:29108"/>
        <label>3</label>
    </ligand>
</feature>
<feature type="binding site" evidence="2">
    <location>
        <position position="113"/>
    </location>
    <ligand>
        <name>Ca(2+)</name>
        <dbReference type="ChEBI" id="CHEBI:29108"/>
        <label>3</label>
    </ligand>
</feature>
<feature type="binding site" evidence="2">
    <location>
        <position position="115"/>
    </location>
    <ligand>
        <name>Ca(2+)</name>
        <dbReference type="ChEBI" id="CHEBI:29108"/>
        <label>3</label>
    </ligand>
</feature>
<feature type="binding site" evidence="2">
    <location>
        <position position="120"/>
    </location>
    <ligand>
        <name>Ca(2+)</name>
        <dbReference type="ChEBI" id="CHEBI:29108"/>
        <label>3</label>
    </ligand>
</feature>
<feature type="binding site" evidence="2">
    <location>
        <position position="145"/>
    </location>
    <ligand>
        <name>Ca(2+)</name>
        <dbReference type="ChEBI" id="CHEBI:29108"/>
        <label>4</label>
    </ligand>
</feature>
<feature type="binding site" evidence="2">
    <location>
        <position position="147"/>
    </location>
    <ligand>
        <name>Ca(2+)</name>
        <dbReference type="ChEBI" id="CHEBI:29108"/>
        <label>4</label>
    </ligand>
</feature>
<feature type="binding site" evidence="2">
    <location>
        <position position="149"/>
    </location>
    <ligand>
        <name>Ca(2+)</name>
        <dbReference type="ChEBI" id="CHEBI:29108"/>
        <label>4</label>
    </ligand>
</feature>
<feature type="binding site" evidence="2">
    <location>
        <position position="151"/>
    </location>
    <ligand>
        <name>Ca(2+)</name>
        <dbReference type="ChEBI" id="CHEBI:29108"/>
        <label>4</label>
    </ligand>
</feature>
<feature type="binding site" evidence="2">
    <location>
        <position position="156"/>
    </location>
    <ligand>
        <name>Ca(2+)</name>
        <dbReference type="ChEBI" id="CHEBI:29108"/>
        <label>4</label>
    </ligand>
</feature>
<evidence type="ECO:0000250" key="1">
    <source>
        <dbReference type="UniProtKB" id="O23184"/>
    </source>
</evidence>
<evidence type="ECO:0000255" key="2">
    <source>
        <dbReference type="PROSITE-ProRule" id="PRU00448"/>
    </source>
</evidence>
<evidence type="ECO:0000256" key="3">
    <source>
        <dbReference type="SAM" id="MobiDB-lite"/>
    </source>
</evidence>
<evidence type="ECO:0000269" key="4">
    <source>
    </source>
</evidence>
<evidence type="ECO:0000269" key="5">
    <source>
    </source>
</evidence>
<evidence type="ECO:0000269" key="6">
    <source>
    </source>
</evidence>
<evidence type="ECO:0000269" key="7">
    <source>
    </source>
</evidence>
<evidence type="ECO:0000303" key="8">
    <source>
    </source>
</evidence>
<evidence type="ECO:0000303" key="9">
    <source ref="6"/>
</evidence>
<evidence type="ECO:0000305" key="10"/>
<evidence type="ECO:0000312" key="11">
    <source>
        <dbReference type="Araport" id="AT3G50360"/>
    </source>
</evidence>
<evidence type="ECO:0000312" key="12">
    <source>
        <dbReference type="EMBL" id="CAB62315.1"/>
    </source>
</evidence>
<reference key="1">
    <citation type="journal article" date="1998" name="FEBS Lett.">
        <title>Characterization of early induced genes in Arabidopsis thaliana responding to bacterial inoculation: identification of centrin and of a novel protein with two regions related to kinase domains.</title>
        <authorList>
            <person name="Cordeiro M.C.R."/>
            <person name="Piqueras R."/>
            <person name="de Oliveira D.E."/>
            <person name="Castresana C."/>
        </authorList>
    </citation>
    <scope>NUCLEOTIDE SEQUENCE [MRNA]</scope>
    <scope>INDUCTION</scope>
    <source>
        <strain>cv. Columbia</strain>
    </source>
</reference>
<reference key="2">
    <citation type="journal article" date="2000" name="Nature">
        <title>Sequence and analysis of chromosome 3 of the plant Arabidopsis thaliana.</title>
        <authorList>
            <person name="Salanoubat M."/>
            <person name="Lemcke K."/>
            <person name="Rieger M."/>
            <person name="Ansorge W."/>
            <person name="Unseld M."/>
            <person name="Fartmann B."/>
            <person name="Valle G."/>
            <person name="Bloecker H."/>
            <person name="Perez-Alonso M."/>
            <person name="Obermaier B."/>
            <person name="Delseny M."/>
            <person name="Boutry M."/>
            <person name="Grivell L.A."/>
            <person name="Mache R."/>
            <person name="Puigdomenech P."/>
            <person name="De Simone V."/>
            <person name="Choisne N."/>
            <person name="Artiguenave F."/>
            <person name="Robert C."/>
            <person name="Brottier P."/>
            <person name="Wincker P."/>
            <person name="Cattolico L."/>
            <person name="Weissenbach J."/>
            <person name="Saurin W."/>
            <person name="Quetier F."/>
            <person name="Schaefer M."/>
            <person name="Mueller-Auer S."/>
            <person name="Gabel C."/>
            <person name="Fuchs M."/>
            <person name="Benes V."/>
            <person name="Wurmbach E."/>
            <person name="Drzonek H."/>
            <person name="Erfle H."/>
            <person name="Jordan N."/>
            <person name="Bangert S."/>
            <person name="Wiedelmann R."/>
            <person name="Kranz H."/>
            <person name="Voss H."/>
            <person name="Holland R."/>
            <person name="Brandt P."/>
            <person name="Nyakatura G."/>
            <person name="Vezzi A."/>
            <person name="D'Angelo M."/>
            <person name="Pallavicini A."/>
            <person name="Toppo S."/>
            <person name="Simionati B."/>
            <person name="Conrad A."/>
            <person name="Hornischer K."/>
            <person name="Kauer G."/>
            <person name="Loehnert T.-H."/>
            <person name="Nordsiek G."/>
            <person name="Reichelt J."/>
            <person name="Scharfe M."/>
            <person name="Schoen O."/>
            <person name="Bargues M."/>
            <person name="Terol J."/>
            <person name="Climent J."/>
            <person name="Navarro P."/>
            <person name="Collado C."/>
            <person name="Perez-Perez A."/>
            <person name="Ottenwaelder B."/>
            <person name="Duchemin D."/>
            <person name="Cooke R."/>
            <person name="Laudie M."/>
            <person name="Berger-Llauro C."/>
            <person name="Purnelle B."/>
            <person name="Masuy D."/>
            <person name="de Haan M."/>
            <person name="Maarse A.C."/>
            <person name="Alcaraz J.-P."/>
            <person name="Cottet A."/>
            <person name="Casacuberta E."/>
            <person name="Monfort A."/>
            <person name="Argiriou A."/>
            <person name="Flores M."/>
            <person name="Liguori R."/>
            <person name="Vitale D."/>
            <person name="Mannhaupt G."/>
            <person name="Haase D."/>
            <person name="Schoof H."/>
            <person name="Rudd S."/>
            <person name="Zaccaria P."/>
            <person name="Mewes H.-W."/>
            <person name="Mayer K.F.X."/>
            <person name="Kaul S."/>
            <person name="Town C.D."/>
            <person name="Koo H.L."/>
            <person name="Tallon L.J."/>
            <person name="Jenkins J."/>
            <person name="Rooney T."/>
            <person name="Rizzo M."/>
            <person name="Walts A."/>
            <person name="Utterback T."/>
            <person name="Fujii C.Y."/>
            <person name="Shea T.P."/>
            <person name="Creasy T.H."/>
            <person name="Haas B."/>
            <person name="Maiti R."/>
            <person name="Wu D."/>
            <person name="Peterson J."/>
            <person name="Van Aken S."/>
            <person name="Pai G."/>
            <person name="Militscher J."/>
            <person name="Sellers P."/>
            <person name="Gill J.E."/>
            <person name="Feldblyum T.V."/>
            <person name="Preuss D."/>
            <person name="Lin X."/>
            <person name="Nierman W.C."/>
            <person name="Salzberg S.L."/>
            <person name="White O."/>
            <person name="Venter J.C."/>
            <person name="Fraser C.M."/>
            <person name="Kaneko T."/>
            <person name="Nakamura Y."/>
            <person name="Sato S."/>
            <person name="Kato T."/>
            <person name="Asamizu E."/>
            <person name="Sasamoto S."/>
            <person name="Kimura T."/>
            <person name="Idesawa K."/>
            <person name="Kawashima K."/>
            <person name="Kishida Y."/>
            <person name="Kiyokawa C."/>
            <person name="Kohara M."/>
            <person name="Matsumoto M."/>
            <person name="Matsuno A."/>
            <person name="Muraki A."/>
            <person name="Nakayama S."/>
            <person name="Nakazaki N."/>
            <person name="Shinpo S."/>
            <person name="Takeuchi C."/>
            <person name="Wada T."/>
            <person name="Watanabe A."/>
            <person name="Yamada M."/>
            <person name="Yasuda M."/>
            <person name="Tabata S."/>
        </authorList>
    </citation>
    <scope>NUCLEOTIDE SEQUENCE [LARGE SCALE GENOMIC DNA]</scope>
    <source>
        <strain>cv. Columbia</strain>
    </source>
</reference>
<reference key="3">
    <citation type="journal article" date="2017" name="Plant J.">
        <title>Araport11: a complete reannotation of the Arabidopsis thaliana reference genome.</title>
        <authorList>
            <person name="Cheng C.Y."/>
            <person name="Krishnakumar V."/>
            <person name="Chan A.P."/>
            <person name="Thibaud-Nissen F."/>
            <person name="Schobel S."/>
            <person name="Town C.D."/>
        </authorList>
    </citation>
    <scope>GENOME REANNOTATION</scope>
    <source>
        <strain>cv. Columbia</strain>
    </source>
</reference>
<reference key="4">
    <citation type="submission" date="2004-09" db="EMBL/GenBank/DDBJ databases">
        <title>Large-scale analysis of RIKEN Arabidopsis full-length (RAFL) cDNAs.</title>
        <authorList>
            <person name="Totoki Y."/>
            <person name="Seki M."/>
            <person name="Ishida J."/>
            <person name="Nakajima M."/>
            <person name="Enju A."/>
            <person name="Kamiya A."/>
            <person name="Narusaka M."/>
            <person name="Shin-i T."/>
            <person name="Nakagawa M."/>
            <person name="Sakamoto N."/>
            <person name="Oishi K."/>
            <person name="Kohara Y."/>
            <person name="Kobayashi M."/>
            <person name="Toyoda A."/>
            <person name="Sakaki Y."/>
            <person name="Sakurai T."/>
            <person name="Iida K."/>
            <person name="Akiyama K."/>
            <person name="Satou M."/>
            <person name="Toyoda T."/>
            <person name="Konagaya A."/>
            <person name="Carninci P."/>
            <person name="Kawai J."/>
            <person name="Hayashizaki Y."/>
            <person name="Shinozaki K."/>
        </authorList>
    </citation>
    <scope>NUCLEOTIDE SEQUENCE [LARGE SCALE MRNA]</scope>
    <source>
        <strain>cv. Columbia</strain>
    </source>
</reference>
<reference key="5">
    <citation type="submission" date="2006-05" db="EMBL/GenBank/DDBJ databases">
        <title>Arabidopsis ORF clones.</title>
        <authorList>
            <person name="Kim C.J."/>
            <person name="Chen H."/>
            <person name="Quinitio C."/>
            <person name="Shinn P."/>
            <person name="Ecker J.R."/>
        </authorList>
    </citation>
    <scope>NUCLEOTIDE SEQUENCE [LARGE SCALE MRNA]</scope>
    <source>
        <strain>cv. Columbia</strain>
    </source>
</reference>
<reference key="6">
    <citation type="journal article" date="2003" name="New Phytol.">
        <title>Calmodulins and related potential calcium sensors of Arabidopsis.</title>
        <authorList>
            <person name="McCormack E."/>
            <person name="Braam J."/>
        </authorList>
    </citation>
    <scope>GENE FAMILY</scope>
    <scope>NOMENCLATURE</scope>
</reference>
<reference key="7">
    <citation type="journal article" date="2008" name="Plant Cell">
        <title>Arabidopsis TONNEAU1 proteins are essential for preprophase band formation and interact with centrin.</title>
        <authorList>
            <person name="Azimzadeh J."/>
            <person name="Nacry P."/>
            <person name="Christodoulidou A."/>
            <person name="Drevensek S."/>
            <person name="Camilleri C."/>
            <person name="Amiour N."/>
            <person name="Parcy F."/>
            <person name="Pastuglia M."/>
            <person name="Bouchez D."/>
        </authorList>
    </citation>
    <scope>INTERACTION WITH TON1A AND TON1B</scope>
    <source>
        <strain>cv. Columbia</strain>
    </source>
</reference>
<reference key="8">
    <citation type="journal article" date="2010" name="Plant J.">
        <title>Arabidopsis homolog of the yeast TREX-2 mRNA export complex: components and anchoring nucleoporin.</title>
        <authorList>
            <person name="Lu Q."/>
            <person name="Tang X."/>
            <person name="Tian G."/>
            <person name="Wang F."/>
            <person name="Liu K."/>
            <person name="Nguyen V."/>
            <person name="Kohalmi S.E."/>
            <person name="Keller W.A."/>
            <person name="Tsang E.W."/>
            <person name="Harada J.J."/>
            <person name="Rothstein S.J."/>
            <person name="Cui Y."/>
        </authorList>
    </citation>
    <scope>INTERACTION WITH SAC3A AND SAC3B</scope>
</reference>
<reference key="9">
    <citation type="journal article" date="2012" name="Plant Signal. Behav.">
        <title>Evidence that the Arabidopsis Ubiquitin C-terminal Hydrolases 1 and 2 associate with the 26S proteasome and the TREX-2 complex.</title>
        <authorList>
            <person name="Tian G."/>
            <person name="Lu Q."/>
            <person name="Kohalmi S.E."/>
            <person name="Rothstein S.J."/>
            <person name="Cui Y."/>
        </authorList>
    </citation>
    <scope>INTERACTION WITH UCH1 AND UCH2</scope>
</reference>